<name>FTSQ_THISK</name>
<organism>
    <name type="scientific">Thioalkalivibrio sp. (strain K90mix)</name>
    <dbReference type="NCBI Taxonomy" id="396595"/>
    <lineage>
        <taxon>Bacteria</taxon>
        <taxon>Pseudomonadati</taxon>
        <taxon>Pseudomonadota</taxon>
        <taxon>Gammaproteobacteria</taxon>
        <taxon>Chromatiales</taxon>
        <taxon>Ectothiorhodospiraceae</taxon>
        <taxon>Thioalkalivibrio</taxon>
    </lineage>
</organism>
<comment type="function">
    <text evidence="1">Essential cell division protein. May link together the upstream cell division proteins, which are predominantly cytoplasmic, with the downstream cell division proteins, which are predominantly periplasmic. May control correct divisome assembly.</text>
</comment>
<comment type="subunit">
    <text evidence="1">Part of a complex composed of FtsB, FtsL and FtsQ.</text>
</comment>
<comment type="subcellular location">
    <subcellularLocation>
        <location evidence="1">Cell inner membrane</location>
        <topology evidence="1">Single-pass type II membrane protein</topology>
    </subcellularLocation>
    <text evidence="1">Localizes to the division septum.</text>
</comment>
<comment type="similarity">
    <text evidence="1">Belongs to the FtsQ/DivIB family. FtsQ subfamily.</text>
</comment>
<sequence length="240" mass="26425">MTGPGLRLLAGMGLAGALVLGLSLWLHFDPDQHLPIGSIQITGEPRHADTDAILERVRAHAPGFVGTDLEVLREELQAMPWVDAVQLRRRWPDTLEVHVTEPVPVAQWGDDHLVDRHGRLFGPVDLAEWDFLPALAGEDGRQVVLMHRYLEVSARLADAGFEVVGVHEGKRHDWTIHLADGAEVLMGRDVNLNRLGQLVRAAPALRAREDAPIARVDLRYPHGLAVAWAEEADNDGGNAR</sequence>
<gene>
    <name evidence="1" type="primary">ftsQ</name>
    <name type="ordered locus">TK90_2197</name>
</gene>
<reference key="1">
    <citation type="submission" date="2010-02" db="EMBL/GenBank/DDBJ databases">
        <title>Complete sequence of chromosome of Thioalkalivibrio sp. K90mix.</title>
        <authorList>
            <consortium name="US DOE Joint Genome Institute"/>
            <person name="Lucas S."/>
            <person name="Copeland A."/>
            <person name="Lapidus A."/>
            <person name="Cheng J.-F."/>
            <person name="Bruce D."/>
            <person name="Goodwin L."/>
            <person name="Pitluck S."/>
            <person name="Foster B."/>
            <person name="Sun H."/>
            <person name="Larimer F."/>
            <person name="Land M."/>
            <person name="Hauser L."/>
            <person name="Kyrpides N."/>
            <person name="Ivanova N."/>
            <person name="Sorokin D.Y."/>
            <person name="Muyzer G."/>
            <person name="Woyke T."/>
        </authorList>
    </citation>
    <scope>NUCLEOTIDE SEQUENCE [LARGE SCALE GENOMIC DNA]</scope>
    <source>
        <strain>K90mix</strain>
    </source>
</reference>
<evidence type="ECO:0000255" key="1">
    <source>
        <dbReference type="HAMAP-Rule" id="MF_00911"/>
    </source>
</evidence>
<evidence type="ECO:0000255" key="2">
    <source>
        <dbReference type="PROSITE-ProRule" id="PRU01115"/>
    </source>
</evidence>
<keyword id="KW-0131">Cell cycle</keyword>
<keyword id="KW-0132">Cell division</keyword>
<keyword id="KW-0997">Cell inner membrane</keyword>
<keyword id="KW-1003">Cell membrane</keyword>
<keyword id="KW-0472">Membrane</keyword>
<keyword id="KW-0812">Transmembrane</keyword>
<keyword id="KW-1133">Transmembrane helix</keyword>
<dbReference type="EMBL" id="CP001905">
    <property type="protein sequence ID" value="ADC72687.1"/>
    <property type="molecule type" value="Genomic_DNA"/>
</dbReference>
<dbReference type="RefSeq" id="WP_012983559.1">
    <property type="nucleotide sequence ID" value="NC_013889.1"/>
</dbReference>
<dbReference type="SMR" id="D3SD88"/>
<dbReference type="STRING" id="396595.TK90_2197"/>
<dbReference type="KEGG" id="tkm:TK90_2197"/>
<dbReference type="eggNOG" id="COG1589">
    <property type="taxonomic scope" value="Bacteria"/>
</dbReference>
<dbReference type="HOGENOM" id="CLU_064041_1_1_6"/>
<dbReference type="OrthoDB" id="9790370at2"/>
<dbReference type="Proteomes" id="UP000009099">
    <property type="component" value="Chromosome"/>
</dbReference>
<dbReference type="GO" id="GO:0032153">
    <property type="term" value="C:cell division site"/>
    <property type="evidence" value="ECO:0007669"/>
    <property type="project" value="UniProtKB-UniRule"/>
</dbReference>
<dbReference type="GO" id="GO:0005886">
    <property type="term" value="C:plasma membrane"/>
    <property type="evidence" value="ECO:0007669"/>
    <property type="project" value="UniProtKB-SubCell"/>
</dbReference>
<dbReference type="GO" id="GO:0090529">
    <property type="term" value="P:cell septum assembly"/>
    <property type="evidence" value="ECO:0007669"/>
    <property type="project" value="InterPro"/>
</dbReference>
<dbReference type="GO" id="GO:0043093">
    <property type="term" value="P:FtsZ-dependent cytokinesis"/>
    <property type="evidence" value="ECO:0007669"/>
    <property type="project" value="UniProtKB-UniRule"/>
</dbReference>
<dbReference type="Gene3D" id="3.40.50.11690">
    <property type="entry name" value="Cell division protein FtsQ/DivIB"/>
    <property type="match status" value="1"/>
</dbReference>
<dbReference type="Gene3D" id="3.10.20.310">
    <property type="entry name" value="membrane protein fhac"/>
    <property type="match status" value="1"/>
</dbReference>
<dbReference type="HAMAP" id="MF_00911">
    <property type="entry name" value="FtsQ_subfam"/>
    <property type="match status" value="1"/>
</dbReference>
<dbReference type="InterPro" id="IPR005548">
    <property type="entry name" value="Cell_div_FtsQ/DivIB_C"/>
</dbReference>
<dbReference type="InterPro" id="IPR026579">
    <property type="entry name" value="FtsQ"/>
</dbReference>
<dbReference type="InterPro" id="IPR045335">
    <property type="entry name" value="FtsQ_C_sf"/>
</dbReference>
<dbReference type="InterPro" id="IPR034746">
    <property type="entry name" value="POTRA"/>
</dbReference>
<dbReference type="InterPro" id="IPR013685">
    <property type="entry name" value="POTRA_FtsQ_type"/>
</dbReference>
<dbReference type="PANTHER" id="PTHR35851">
    <property type="entry name" value="CELL DIVISION PROTEIN FTSQ"/>
    <property type="match status" value="1"/>
</dbReference>
<dbReference type="PANTHER" id="PTHR35851:SF1">
    <property type="entry name" value="CELL DIVISION PROTEIN FTSQ"/>
    <property type="match status" value="1"/>
</dbReference>
<dbReference type="Pfam" id="PF03799">
    <property type="entry name" value="FtsQ_DivIB_C"/>
    <property type="match status" value="1"/>
</dbReference>
<dbReference type="Pfam" id="PF08478">
    <property type="entry name" value="POTRA_1"/>
    <property type="match status" value="1"/>
</dbReference>
<dbReference type="PROSITE" id="PS51779">
    <property type="entry name" value="POTRA"/>
    <property type="match status" value="1"/>
</dbReference>
<feature type="chain" id="PRO_0000414698" description="Cell division protein FtsQ">
    <location>
        <begin position="1"/>
        <end position="240"/>
    </location>
</feature>
<feature type="topological domain" description="Cytoplasmic" evidence="1">
    <location>
        <begin position="1"/>
        <end position="7"/>
    </location>
</feature>
<feature type="transmembrane region" description="Helical" evidence="1">
    <location>
        <begin position="8"/>
        <end position="28"/>
    </location>
</feature>
<feature type="topological domain" description="Periplasmic" evidence="1">
    <location>
        <begin position="29"/>
        <end position="240"/>
    </location>
</feature>
<feature type="domain" description="POTRA" evidence="2">
    <location>
        <begin position="34"/>
        <end position="102"/>
    </location>
</feature>
<accession>D3SD88</accession>
<protein>
    <recommendedName>
        <fullName evidence="1">Cell division protein FtsQ</fullName>
    </recommendedName>
</protein>
<proteinExistence type="inferred from homology"/>